<organism>
    <name type="scientific">Homo sapiens</name>
    <name type="common">Human</name>
    <dbReference type="NCBI Taxonomy" id="9606"/>
    <lineage>
        <taxon>Eukaryota</taxon>
        <taxon>Metazoa</taxon>
        <taxon>Chordata</taxon>
        <taxon>Craniata</taxon>
        <taxon>Vertebrata</taxon>
        <taxon>Euteleostomi</taxon>
        <taxon>Mammalia</taxon>
        <taxon>Eutheria</taxon>
        <taxon>Euarchontoglires</taxon>
        <taxon>Primates</taxon>
        <taxon>Haplorrhini</taxon>
        <taxon>Catarrhini</taxon>
        <taxon>Hominidae</taxon>
        <taxon>Homo</taxon>
    </lineage>
</organism>
<evidence type="ECO:0000250" key="1">
    <source>
        <dbReference type="UniProtKB" id="Q91WN3"/>
    </source>
</evidence>
<evidence type="ECO:0000255" key="2"/>
<evidence type="ECO:0000269" key="3">
    <source>
    </source>
</evidence>
<evidence type="ECO:0000269" key="4">
    <source>
    </source>
</evidence>
<evidence type="ECO:0000269" key="5">
    <source>
    </source>
</evidence>
<evidence type="ECO:0000303" key="6">
    <source>
    </source>
</evidence>
<evidence type="ECO:0000305" key="7"/>
<name>S7A13_HUMAN</name>
<dbReference type="EMBL" id="AJ417661">
    <property type="protein sequence ID" value="CAD10393.1"/>
    <property type="molecule type" value="mRNA"/>
</dbReference>
<dbReference type="EMBL" id="AK055815">
    <property type="protein sequence ID" value="BAB71021.1"/>
    <property type="molecule type" value="mRNA"/>
</dbReference>
<dbReference type="EMBL" id="CH471060">
    <property type="protein sequence ID" value="EAW91633.1"/>
    <property type="molecule type" value="Genomic_DNA"/>
</dbReference>
<dbReference type="EMBL" id="BC125165">
    <property type="protein sequence ID" value="AAI25166.1"/>
    <property type="molecule type" value="mRNA"/>
</dbReference>
<dbReference type="EMBL" id="BC125166">
    <property type="protein sequence ID" value="AAI25167.1"/>
    <property type="molecule type" value="mRNA"/>
</dbReference>
<dbReference type="EMBL" id="BC029436">
    <property type="protein sequence ID" value="AAH29436.1"/>
    <property type="status" value="ALT_TERM"/>
    <property type="molecule type" value="mRNA"/>
</dbReference>
<dbReference type="CCDS" id="CCDS34917.1">
    <molecule id="Q8TCU3-1"/>
</dbReference>
<dbReference type="RefSeq" id="NP_620172.2">
    <molecule id="Q8TCU3-1"/>
    <property type="nucleotide sequence ID" value="NM_138817.3"/>
</dbReference>
<dbReference type="SMR" id="Q8TCU3"/>
<dbReference type="BioGRID" id="127618">
    <property type="interactions" value="9"/>
</dbReference>
<dbReference type="FunCoup" id="Q8TCU3">
    <property type="interactions" value="4"/>
</dbReference>
<dbReference type="IntAct" id="Q8TCU3">
    <property type="interactions" value="3"/>
</dbReference>
<dbReference type="MINT" id="Q8TCU3"/>
<dbReference type="STRING" id="9606.ENSP00000297524"/>
<dbReference type="TCDB" id="2.A.3.8.24">
    <property type="family name" value="the amino acid-polyamine-organocation (apc) family"/>
</dbReference>
<dbReference type="iPTMnet" id="Q8TCU3"/>
<dbReference type="PhosphoSitePlus" id="Q8TCU3"/>
<dbReference type="BioMuta" id="SLC7A13"/>
<dbReference type="DMDM" id="74751412"/>
<dbReference type="PaxDb" id="9606-ENSP00000297524"/>
<dbReference type="PeptideAtlas" id="Q8TCU3"/>
<dbReference type="Antibodypedia" id="54555">
    <property type="antibodies" value="4 antibodies from 4 providers"/>
</dbReference>
<dbReference type="DNASU" id="157724"/>
<dbReference type="Ensembl" id="ENST00000297524.8">
    <molecule id="Q8TCU3-1"/>
    <property type="protein sequence ID" value="ENSP00000297524.3"/>
    <property type="gene ID" value="ENSG00000164893.9"/>
</dbReference>
<dbReference type="Ensembl" id="ENST00000419776.2">
    <molecule id="Q8TCU3-2"/>
    <property type="protein sequence ID" value="ENSP00000410982.2"/>
    <property type="gene ID" value="ENSG00000164893.9"/>
</dbReference>
<dbReference type="GeneID" id="157724"/>
<dbReference type="KEGG" id="hsa:157724"/>
<dbReference type="MANE-Select" id="ENST00000297524.8">
    <property type="protein sequence ID" value="ENSP00000297524.3"/>
    <property type="RefSeq nucleotide sequence ID" value="NM_138817.3"/>
    <property type="RefSeq protein sequence ID" value="NP_620172.2"/>
</dbReference>
<dbReference type="UCSC" id="uc003ydq.2">
    <molecule id="Q8TCU3-1"/>
    <property type="organism name" value="human"/>
</dbReference>
<dbReference type="AGR" id="HGNC:23092"/>
<dbReference type="CTD" id="157724"/>
<dbReference type="DisGeNET" id="157724"/>
<dbReference type="GeneCards" id="SLC7A13"/>
<dbReference type="HGNC" id="HGNC:23092">
    <property type="gene designation" value="SLC7A13"/>
</dbReference>
<dbReference type="HPA" id="ENSG00000164893">
    <property type="expression patterns" value="Tissue enriched (kidney)"/>
</dbReference>
<dbReference type="MalaCards" id="SLC7A13"/>
<dbReference type="MIM" id="617256">
    <property type="type" value="gene"/>
</dbReference>
<dbReference type="neXtProt" id="NX_Q8TCU3"/>
<dbReference type="OpenTargets" id="ENSG00000164893"/>
<dbReference type="PharmGKB" id="PA134980828"/>
<dbReference type="VEuPathDB" id="HostDB:ENSG00000164893"/>
<dbReference type="eggNOG" id="KOG1287">
    <property type="taxonomic scope" value="Eukaryota"/>
</dbReference>
<dbReference type="GeneTree" id="ENSGT00940000162798"/>
<dbReference type="HOGENOM" id="CLU_007946_3_0_1"/>
<dbReference type="InParanoid" id="Q8TCU3"/>
<dbReference type="OMA" id="EGSNWSW"/>
<dbReference type="OrthoDB" id="9477746at2759"/>
<dbReference type="PAN-GO" id="Q8TCU3">
    <property type="GO annotations" value="2 GO annotations based on evolutionary models"/>
</dbReference>
<dbReference type="PhylomeDB" id="Q8TCU3"/>
<dbReference type="TreeFam" id="TF313355"/>
<dbReference type="PathwayCommons" id="Q8TCU3"/>
<dbReference type="SignaLink" id="Q8TCU3"/>
<dbReference type="BioGRID-ORCS" id="157724">
    <property type="hits" value="9 hits in 1146 CRISPR screens"/>
</dbReference>
<dbReference type="ChiTaRS" id="SLC7A13">
    <property type="organism name" value="human"/>
</dbReference>
<dbReference type="GenomeRNAi" id="157724"/>
<dbReference type="Pharos" id="Q8TCU3">
    <property type="development level" value="Tdark"/>
</dbReference>
<dbReference type="PRO" id="PR:Q8TCU3"/>
<dbReference type="Proteomes" id="UP000005640">
    <property type="component" value="Chromosome 8"/>
</dbReference>
<dbReference type="RNAct" id="Q8TCU3">
    <property type="molecule type" value="protein"/>
</dbReference>
<dbReference type="Bgee" id="ENSG00000164893">
    <property type="expression patterns" value="Expressed in kidney epithelium and 36 other cell types or tissues"/>
</dbReference>
<dbReference type="GO" id="GO:0016324">
    <property type="term" value="C:apical plasma membrane"/>
    <property type="evidence" value="ECO:0007669"/>
    <property type="project" value="UniProtKB-SubCell"/>
</dbReference>
<dbReference type="GO" id="GO:0015297">
    <property type="term" value="F:antiporter activity"/>
    <property type="evidence" value="ECO:0007669"/>
    <property type="project" value="UniProtKB-KW"/>
</dbReference>
<dbReference type="GO" id="GO:0015179">
    <property type="term" value="F:L-amino acid transmembrane transporter activity"/>
    <property type="evidence" value="ECO:0000318"/>
    <property type="project" value="GO_Central"/>
</dbReference>
<dbReference type="GO" id="GO:0046982">
    <property type="term" value="F:protein heterodimerization activity"/>
    <property type="evidence" value="ECO:0007669"/>
    <property type="project" value="Ensembl"/>
</dbReference>
<dbReference type="GO" id="GO:0003333">
    <property type="term" value="P:amino acid transmembrane transport"/>
    <property type="evidence" value="ECO:0000318"/>
    <property type="project" value="GO_Central"/>
</dbReference>
<dbReference type="GO" id="GO:0015810">
    <property type="term" value="P:aspartate transmembrane transport"/>
    <property type="evidence" value="ECO:0007669"/>
    <property type="project" value="Ensembl"/>
</dbReference>
<dbReference type="GO" id="GO:0015811">
    <property type="term" value="P:L-cystine transport"/>
    <property type="evidence" value="ECO:0007669"/>
    <property type="project" value="Ensembl"/>
</dbReference>
<dbReference type="GO" id="GO:0015813">
    <property type="term" value="P:L-glutamate transmembrane transport"/>
    <property type="evidence" value="ECO:0007669"/>
    <property type="project" value="Ensembl"/>
</dbReference>
<dbReference type="FunFam" id="1.20.1740.10:FF:000036">
    <property type="entry name" value="Solute carrier family 7 member 13"/>
    <property type="match status" value="1"/>
</dbReference>
<dbReference type="Gene3D" id="1.20.1740.10">
    <property type="entry name" value="Amino acid/polyamine transporter I"/>
    <property type="match status" value="1"/>
</dbReference>
<dbReference type="InterPro" id="IPR002293">
    <property type="entry name" value="AA/rel_permease1"/>
</dbReference>
<dbReference type="InterPro" id="IPR050598">
    <property type="entry name" value="AminoAcid_Transporter"/>
</dbReference>
<dbReference type="PANTHER" id="PTHR11785">
    <property type="entry name" value="AMINO ACID TRANSPORTER"/>
    <property type="match status" value="1"/>
</dbReference>
<dbReference type="PANTHER" id="PTHR11785:SF238">
    <property type="entry name" value="SOLUTE CARRIER FAMILY 7 MEMBER 13"/>
    <property type="match status" value="1"/>
</dbReference>
<dbReference type="Pfam" id="PF13520">
    <property type="entry name" value="AA_permease_2"/>
    <property type="match status" value="1"/>
</dbReference>
<dbReference type="PIRSF" id="PIRSF006060">
    <property type="entry name" value="AA_transporter"/>
    <property type="match status" value="1"/>
</dbReference>
<proteinExistence type="evidence at transcript level"/>
<sequence length="470" mass="52114">MDRGEKIQLKRVFGYWWGTSFLLINIIGAGIFVSPKGVLAYSCMNVGVSLCVWAGCAILAMTSTLCSAEISISFPCSGAQYYFLKRYFGSTVAFLNLWTSLFLGSGVVAGQALLLAEYSIQPFFPSCSVPKLPKKCLALAMLWIVGILTSRGVKEVTWLQIASSVLKVSILSFISLTGVVFLIRGKKENVERFQNAFDAELPDISHLIQAIFQGYFAYSGGACFTLIAGELKKPRTTIPKCIFTALPLVTVVYLLVNISYLTVLTPREILSSDAVAITWADRAFPSLAWIMPFAISTSLFSNLLISIFKSSRPIYLASQEGQLPLLFNTLNSHSSPFTAVLLLVTLGSLAIILTSLIDLINYIFFTGSLWSILLMIGILRRRYQEPNLSIPYKVFLSFPLATIVIDVGLVVIPLVKSPNVHYVYVLLLVLSGLLFYIPLIHFKIRLAWFEKMTCYLQLLFNICLPDVSEE</sequence>
<feature type="chain" id="PRO_0000330725" description="Solute carrier family 7 member 13">
    <location>
        <begin position="1"/>
        <end position="470"/>
    </location>
</feature>
<feature type="topological domain" description="Cytoplasmic" evidence="2">
    <location>
        <begin position="1"/>
        <end position="11"/>
    </location>
</feature>
<feature type="transmembrane region" description="Helical; Name=1" evidence="2">
    <location>
        <begin position="12"/>
        <end position="32"/>
    </location>
</feature>
<feature type="topological domain" description="Extracellular" evidence="2">
    <location>
        <begin position="33"/>
        <end position="45"/>
    </location>
</feature>
<feature type="transmembrane region" description="Helical; Name=2" evidence="2">
    <location>
        <begin position="46"/>
        <end position="66"/>
    </location>
</feature>
<feature type="topological domain" description="Cytoplasmic" evidence="2">
    <location>
        <begin position="67"/>
        <end position="87"/>
    </location>
</feature>
<feature type="transmembrane region" description="Helical; Name=3" evidence="2">
    <location>
        <begin position="88"/>
        <end position="108"/>
    </location>
</feature>
<feature type="topological domain" description="Extracellular" evidence="2">
    <location>
        <begin position="109"/>
        <end position="128"/>
    </location>
</feature>
<feature type="transmembrane region" description="Helical; Name=4" evidence="2">
    <location>
        <begin position="129"/>
        <end position="149"/>
    </location>
</feature>
<feature type="topological domain" description="Cytoplasmic" evidence="2">
    <location>
        <begin position="150"/>
        <end position="162"/>
    </location>
</feature>
<feature type="transmembrane region" description="Helical; Name=5" evidence="2">
    <location>
        <begin position="163"/>
        <end position="183"/>
    </location>
</feature>
<feature type="topological domain" description="Extracellular" evidence="2">
    <location>
        <begin position="184"/>
        <end position="206"/>
    </location>
</feature>
<feature type="transmembrane region" description="Helical; Name=6" evidence="2">
    <location>
        <begin position="207"/>
        <end position="227"/>
    </location>
</feature>
<feature type="topological domain" description="Cytoplasmic" evidence="2">
    <location>
        <begin position="228"/>
        <end position="240"/>
    </location>
</feature>
<feature type="transmembrane region" description="Helical; Name=7" evidence="2">
    <location>
        <begin position="241"/>
        <end position="261"/>
    </location>
</feature>
<feature type="topological domain" description="Extracellular" evidence="2">
    <location>
        <begin position="262"/>
        <end position="287"/>
    </location>
</feature>
<feature type="transmembrane region" description="Helical; Name=8" evidence="2">
    <location>
        <begin position="288"/>
        <end position="308"/>
    </location>
</feature>
<feature type="topological domain" description="Cytoplasmic" evidence="2">
    <location>
        <begin position="309"/>
        <end position="336"/>
    </location>
</feature>
<feature type="transmembrane region" description="Helical; Name=9" evidence="2">
    <location>
        <begin position="337"/>
        <end position="357"/>
    </location>
</feature>
<feature type="topological domain" description="Extracellular" evidence="2">
    <location>
        <position position="358"/>
    </location>
</feature>
<feature type="transmembrane region" description="Helical; Name=10" evidence="2">
    <location>
        <begin position="359"/>
        <end position="379"/>
    </location>
</feature>
<feature type="topological domain" description="Cytoplasmic" evidence="2">
    <location>
        <begin position="380"/>
        <end position="393"/>
    </location>
</feature>
<feature type="transmembrane region" description="Helical; Name=11" evidence="2">
    <location>
        <begin position="394"/>
        <end position="414"/>
    </location>
</feature>
<feature type="topological domain" description="Extracellular" evidence="2">
    <location>
        <begin position="415"/>
        <end position="421"/>
    </location>
</feature>
<feature type="transmembrane region" description="Helical; Name=12" evidence="2">
    <location>
        <begin position="422"/>
        <end position="442"/>
    </location>
</feature>
<feature type="topological domain" description="Cytoplasmic" evidence="2">
    <location>
        <begin position="443"/>
        <end position="470"/>
    </location>
</feature>
<feature type="splice variant" id="VSP_033067" description="In isoform 2." evidence="6">
    <location>
        <begin position="221"/>
        <end position="229"/>
    </location>
</feature>
<feature type="splice variant" id="VSP_033068" description="In isoform 2." evidence="6">
    <original>VFLSFPLATIVIDVGLVVIPLVKSPNVHYVYVLLLVLSGLLFYIPLIHF</original>
    <variation>SLILVVQAGEAGVQWHDLGLLQPLLPGFKRFSCLSLPSSWDYRCFCHFH</variation>
    <location>
        <begin position="394"/>
        <end position="442"/>
    </location>
</feature>
<feature type="splice variant" id="VSP_033069" description="In isoform 2." evidence="6">
    <location>
        <begin position="443"/>
        <end position="470"/>
    </location>
</feature>
<feature type="sequence variant" id="VAR_042716" description="In dbSNP:rs2976189." evidence="4 5">
    <original>V</original>
    <variation>M</variation>
    <location>
        <position position="249"/>
    </location>
</feature>
<feature type="sequence variant" id="VAR_042717" description="In dbSNP:rs4419794.">
    <original>R</original>
    <variation>K</variation>
    <location>
        <position position="380"/>
    </location>
</feature>
<feature type="sequence variant" id="VAR_042718" description="In dbSNP:rs9656982.">
    <original>M</original>
    <variation>T</variation>
    <location>
        <position position="452"/>
    </location>
</feature>
<feature type="sequence variant" id="VAR_042719" description="In dbSNP:rs9693999.">
    <original>E</original>
    <variation>K</variation>
    <location>
        <position position="470"/>
    </location>
</feature>
<comment type="function">
    <text evidence="1">Associates with SLC3A1/rBAT to form a functional heterodimeric complex that transports anionic and neutral amino acids across the apical plasma membrane of renal epithelium. Preferentially mediates exchange transport, but can also operate via facilitated diffusion. May act as a major transporter for L-cystine in late proximal tubules, ensuring its reabsorption from the luminal fluid in exchange for cytosolic L-glutamate or L-aspartate.</text>
</comment>
<comment type="catalytic activity">
    <reaction evidence="1">
        <text>L-cystine(out) + L-aspartate(in) = L-cystine(in) + L-aspartate(out)</text>
        <dbReference type="Rhea" id="RHEA:76299"/>
        <dbReference type="ChEBI" id="CHEBI:29991"/>
        <dbReference type="ChEBI" id="CHEBI:35491"/>
    </reaction>
</comment>
<comment type="catalytic activity">
    <reaction evidence="1">
        <text>L-cystine(out) = L-cystine(in)</text>
        <dbReference type="Rhea" id="RHEA:76303"/>
        <dbReference type="ChEBI" id="CHEBI:35491"/>
    </reaction>
</comment>
<comment type="catalytic activity">
    <reaction evidence="1">
        <text>L-aspartate(in) + L-glutamate(out) = L-aspartate(out) + L-glutamate(in)</text>
        <dbReference type="Rhea" id="RHEA:76307"/>
        <dbReference type="ChEBI" id="CHEBI:29985"/>
        <dbReference type="ChEBI" id="CHEBI:29991"/>
    </reaction>
</comment>
<comment type="catalytic activity">
    <reaction evidence="1">
        <text>L-aspartate(in) + L-glutamine(out) = L-aspartate(out) + L-glutamine(in)</text>
        <dbReference type="Rhea" id="RHEA:76311"/>
        <dbReference type="ChEBI" id="CHEBI:29991"/>
        <dbReference type="ChEBI" id="CHEBI:58359"/>
    </reaction>
</comment>
<comment type="catalytic activity">
    <reaction evidence="1">
        <text>L-aspartate(in) + L-methionine(out) = L-aspartate(out) + L-methionine(in)</text>
        <dbReference type="Rhea" id="RHEA:76315"/>
        <dbReference type="ChEBI" id="CHEBI:29991"/>
        <dbReference type="ChEBI" id="CHEBI:57844"/>
    </reaction>
</comment>
<comment type="catalytic activity">
    <reaction evidence="1">
        <text>L-leucine(out) + L-aspartate(in) = L-leucine(in) + L-aspartate(out)</text>
        <dbReference type="Rhea" id="RHEA:76319"/>
        <dbReference type="ChEBI" id="CHEBI:29991"/>
        <dbReference type="ChEBI" id="CHEBI:57427"/>
    </reaction>
</comment>
<comment type="catalytic activity">
    <reaction evidence="1">
        <text>L-valine(out) + L-aspartate(in) = L-valine(in) + L-aspartate(out)</text>
        <dbReference type="Rhea" id="RHEA:76323"/>
        <dbReference type="ChEBI" id="CHEBI:29991"/>
        <dbReference type="ChEBI" id="CHEBI:57762"/>
    </reaction>
</comment>
<comment type="catalytic activity">
    <reaction evidence="1">
        <text>L-aspartate(in) + L-phenylalanine(out) = L-aspartate(out) + L-phenylalanine(in)</text>
        <dbReference type="Rhea" id="RHEA:76327"/>
        <dbReference type="ChEBI" id="CHEBI:29991"/>
        <dbReference type="ChEBI" id="CHEBI:58095"/>
    </reaction>
</comment>
<comment type="catalytic activity">
    <reaction evidence="1">
        <text>L-tyrosine(out) + L-aspartate(in) = L-tyrosine(in) + L-aspartate(out)</text>
        <dbReference type="Rhea" id="RHEA:76331"/>
        <dbReference type="ChEBI" id="CHEBI:29991"/>
        <dbReference type="ChEBI" id="CHEBI:58315"/>
    </reaction>
</comment>
<comment type="catalytic activity">
    <reaction evidence="1">
        <text>L-tryptophan(out) + L-aspartate(in) = L-tryptophan(in) + L-aspartate(out)</text>
        <dbReference type="Rhea" id="RHEA:76335"/>
        <dbReference type="ChEBI" id="CHEBI:29991"/>
        <dbReference type="ChEBI" id="CHEBI:57912"/>
    </reaction>
</comment>
<comment type="subunit">
    <text evidence="1">Disulfide-linked heterodimer composed of the catalytic light subunit SLC7A13 and the heavy subunit SLC3A1.</text>
</comment>
<comment type="subcellular location">
    <subcellularLocation>
        <location evidence="1">Apical cell membrane</location>
        <topology evidence="2">Multi-pass membrane protein</topology>
    </subcellularLocation>
</comment>
<comment type="alternative products">
    <event type="alternative splicing"/>
    <isoform>
        <id>Q8TCU3-1</id>
        <name>1</name>
        <sequence type="displayed"/>
    </isoform>
    <isoform>
        <id>Q8TCU3-2</id>
        <name>2</name>
        <sequence type="described" ref="VSP_033067 VSP_033068 VSP_033069"/>
    </isoform>
</comment>
<comment type="tissue specificity">
    <text evidence="3">Expressed in the kidney.</text>
</comment>
<comment type="similarity">
    <text evidence="7">Belongs to the amino acid-polyamine-organocation (APC) superfamily.</text>
</comment>
<gene>
    <name type="primary">SLC7A13</name>
    <name type="synonym">AGT1</name>
    <name type="synonym">XAT2</name>
</gene>
<keyword id="KW-0025">Alternative splicing</keyword>
<keyword id="KW-0029">Amino-acid transport</keyword>
<keyword id="KW-0050">Antiport</keyword>
<keyword id="KW-1003">Cell membrane</keyword>
<keyword id="KW-1015">Disulfide bond</keyword>
<keyword id="KW-0472">Membrane</keyword>
<keyword id="KW-1185">Reference proteome</keyword>
<keyword id="KW-0812">Transmembrane</keyword>
<keyword id="KW-1133">Transmembrane helix</keyword>
<keyword id="KW-0813">Transport</keyword>
<protein>
    <recommendedName>
        <fullName>Solute carrier family 7 member 13</fullName>
    </recommendedName>
    <alternativeName>
        <fullName>Sodium-independent aspartate/glutamate transporter 1</fullName>
    </alternativeName>
    <alternativeName>
        <fullName>X-amino acid transporter 2</fullName>
    </alternativeName>
</protein>
<accession>Q8TCU3</accession>
<accession>Q05C37</accession>
<accession>Q08AH9</accession>
<accession>Q96N84</accession>
<reference key="1">
    <citation type="journal article" date="2002" name="Gene">
        <title>Homologues of amino acid permeases: cloning and tissue expression of XAT1 and XAT2.</title>
        <authorList>
            <person name="Blondeau J.-P."/>
        </authorList>
    </citation>
    <scope>NUCLEOTIDE SEQUENCE [MRNA] (ISOFORM 1)</scope>
    <scope>TISSUE SPECIFICITY</scope>
    <source>
        <tissue>Kidney</tissue>
    </source>
</reference>
<reference key="2">
    <citation type="journal article" date="2004" name="Nat. Genet.">
        <title>Complete sequencing and characterization of 21,243 full-length human cDNAs.</title>
        <authorList>
            <person name="Ota T."/>
            <person name="Suzuki Y."/>
            <person name="Nishikawa T."/>
            <person name="Otsuki T."/>
            <person name="Sugiyama T."/>
            <person name="Irie R."/>
            <person name="Wakamatsu A."/>
            <person name="Hayashi K."/>
            <person name="Sato H."/>
            <person name="Nagai K."/>
            <person name="Kimura K."/>
            <person name="Makita H."/>
            <person name="Sekine M."/>
            <person name="Obayashi M."/>
            <person name="Nishi T."/>
            <person name="Shibahara T."/>
            <person name="Tanaka T."/>
            <person name="Ishii S."/>
            <person name="Yamamoto J."/>
            <person name="Saito K."/>
            <person name="Kawai Y."/>
            <person name="Isono Y."/>
            <person name="Nakamura Y."/>
            <person name="Nagahari K."/>
            <person name="Murakami K."/>
            <person name="Yasuda T."/>
            <person name="Iwayanagi T."/>
            <person name="Wagatsuma M."/>
            <person name="Shiratori A."/>
            <person name="Sudo H."/>
            <person name="Hosoiri T."/>
            <person name="Kaku Y."/>
            <person name="Kodaira H."/>
            <person name="Kondo H."/>
            <person name="Sugawara M."/>
            <person name="Takahashi M."/>
            <person name="Kanda K."/>
            <person name="Yokoi T."/>
            <person name="Furuya T."/>
            <person name="Kikkawa E."/>
            <person name="Omura Y."/>
            <person name="Abe K."/>
            <person name="Kamihara K."/>
            <person name="Katsuta N."/>
            <person name="Sato K."/>
            <person name="Tanikawa M."/>
            <person name="Yamazaki M."/>
            <person name="Ninomiya K."/>
            <person name="Ishibashi T."/>
            <person name="Yamashita H."/>
            <person name="Murakawa K."/>
            <person name="Fujimori K."/>
            <person name="Tanai H."/>
            <person name="Kimata M."/>
            <person name="Watanabe M."/>
            <person name="Hiraoka S."/>
            <person name="Chiba Y."/>
            <person name="Ishida S."/>
            <person name="Ono Y."/>
            <person name="Takiguchi S."/>
            <person name="Watanabe S."/>
            <person name="Yosida M."/>
            <person name="Hotuta T."/>
            <person name="Kusano J."/>
            <person name="Kanehori K."/>
            <person name="Takahashi-Fujii A."/>
            <person name="Hara H."/>
            <person name="Tanase T.-O."/>
            <person name="Nomura Y."/>
            <person name="Togiya S."/>
            <person name="Komai F."/>
            <person name="Hara R."/>
            <person name="Takeuchi K."/>
            <person name="Arita M."/>
            <person name="Imose N."/>
            <person name="Musashino K."/>
            <person name="Yuuki H."/>
            <person name="Oshima A."/>
            <person name="Sasaki N."/>
            <person name="Aotsuka S."/>
            <person name="Yoshikawa Y."/>
            <person name="Matsunawa H."/>
            <person name="Ichihara T."/>
            <person name="Shiohata N."/>
            <person name="Sano S."/>
            <person name="Moriya S."/>
            <person name="Momiyama H."/>
            <person name="Satoh N."/>
            <person name="Takami S."/>
            <person name="Terashima Y."/>
            <person name="Suzuki O."/>
            <person name="Nakagawa S."/>
            <person name="Senoh A."/>
            <person name="Mizoguchi H."/>
            <person name="Goto Y."/>
            <person name="Shimizu F."/>
            <person name="Wakebe H."/>
            <person name="Hishigaki H."/>
            <person name="Watanabe T."/>
            <person name="Sugiyama A."/>
            <person name="Takemoto M."/>
            <person name="Kawakami B."/>
            <person name="Yamazaki M."/>
            <person name="Watanabe K."/>
            <person name="Kumagai A."/>
            <person name="Itakura S."/>
            <person name="Fukuzumi Y."/>
            <person name="Fujimori Y."/>
            <person name="Komiyama M."/>
            <person name="Tashiro H."/>
            <person name="Tanigami A."/>
            <person name="Fujiwara T."/>
            <person name="Ono T."/>
            <person name="Yamada K."/>
            <person name="Fujii Y."/>
            <person name="Ozaki K."/>
            <person name="Hirao M."/>
            <person name="Ohmori Y."/>
            <person name="Kawabata A."/>
            <person name="Hikiji T."/>
            <person name="Kobatake N."/>
            <person name="Inagaki H."/>
            <person name="Ikema Y."/>
            <person name="Okamoto S."/>
            <person name="Okitani R."/>
            <person name="Kawakami T."/>
            <person name="Noguchi S."/>
            <person name="Itoh T."/>
            <person name="Shigeta K."/>
            <person name="Senba T."/>
            <person name="Matsumura K."/>
            <person name="Nakajima Y."/>
            <person name="Mizuno T."/>
            <person name="Morinaga M."/>
            <person name="Sasaki M."/>
            <person name="Togashi T."/>
            <person name="Oyama M."/>
            <person name="Hata H."/>
            <person name="Watanabe M."/>
            <person name="Komatsu T."/>
            <person name="Mizushima-Sugano J."/>
            <person name="Satoh T."/>
            <person name="Shirai Y."/>
            <person name="Takahashi Y."/>
            <person name="Nakagawa K."/>
            <person name="Okumura K."/>
            <person name="Nagase T."/>
            <person name="Nomura N."/>
            <person name="Kikuchi H."/>
            <person name="Masuho Y."/>
            <person name="Yamashita R."/>
            <person name="Nakai K."/>
            <person name="Yada T."/>
            <person name="Nakamura Y."/>
            <person name="Ohara O."/>
            <person name="Isogai T."/>
            <person name="Sugano S."/>
        </authorList>
    </citation>
    <scope>NUCLEOTIDE SEQUENCE [LARGE SCALE MRNA] (ISOFORM 1)</scope>
    <scope>VARIANT MET-249</scope>
    <source>
        <tissue>Kidney</tissue>
    </source>
</reference>
<reference key="3">
    <citation type="submission" date="2005-07" db="EMBL/GenBank/DDBJ databases">
        <authorList>
            <person name="Mural R.J."/>
            <person name="Istrail S."/>
            <person name="Sutton G.G."/>
            <person name="Florea L."/>
            <person name="Halpern A.L."/>
            <person name="Mobarry C.M."/>
            <person name="Lippert R."/>
            <person name="Walenz B."/>
            <person name="Shatkay H."/>
            <person name="Dew I."/>
            <person name="Miller J.R."/>
            <person name="Flanigan M.J."/>
            <person name="Edwards N.J."/>
            <person name="Bolanos R."/>
            <person name="Fasulo D."/>
            <person name="Halldorsson B.V."/>
            <person name="Hannenhalli S."/>
            <person name="Turner R."/>
            <person name="Yooseph S."/>
            <person name="Lu F."/>
            <person name="Nusskern D.R."/>
            <person name="Shue B.C."/>
            <person name="Zheng X.H."/>
            <person name="Zhong F."/>
            <person name="Delcher A.L."/>
            <person name="Huson D.H."/>
            <person name="Kravitz S.A."/>
            <person name="Mouchard L."/>
            <person name="Reinert K."/>
            <person name="Remington K.A."/>
            <person name="Clark A.G."/>
            <person name="Waterman M.S."/>
            <person name="Eichler E.E."/>
            <person name="Adams M.D."/>
            <person name="Hunkapiller M.W."/>
            <person name="Myers E.W."/>
            <person name="Venter J.C."/>
        </authorList>
    </citation>
    <scope>NUCLEOTIDE SEQUENCE [LARGE SCALE GENOMIC DNA]</scope>
</reference>
<reference key="4">
    <citation type="journal article" date="2004" name="Genome Res.">
        <title>The status, quality, and expansion of the NIH full-length cDNA project: the Mammalian Gene Collection (MGC).</title>
        <authorList>
            <consortium name="The MGC Project Team"/>
        </authorList>
    </citation>
    <scope>NUCLEOTIDE SEQUENCE [LARGE SCALE MRNA] (ISOFORMS 1 AND 2)</scope>
    <scope>VARIANT MET-249</scope>
    <source>
        <tissue>Kidney</tissue>
    </source>
</reference>